<keyword id="KW-0687">Ribonucleoprotein</keyword>
<keyword id="KW-0689">Ribosomal protein</keyword>
<keyword id="KW-0694">RNA-binding</keyword>
<keyword id="KW-0699">rRNA-binding</keyword>
<keyword id="KW-0820">tRNA-binding</keyword>
<feature type="chain" id="PRO_0000344305" description="Small ribosomal subunit protein uS7">
    <location>
        <begin position="1"/>
        <end position="154"/>
    </location>
</feature>
<protein>
    <recommendedName>
        <fullName evidence="1">Small ribosomal subunit protein uS7</fullName>
    </recommendedName>
    <alternativeName>
        <fullName evidence="2">30S ribosomal protein S7</fullName>
    </alternativeName>
</protein>
<accession>A8Z665</accession>
<organism>
    <name type="scientific">Karelsulcia muelleri (strain GWSS)</name>
    <name type="common">Sulcia muelleri</name>
    <dbReference type="NCBI Taxonomy" id="444179"/>
    <lineage>
        <taxon>Bacteria</taxon>
        <taxon>Pseudomonadati</taxon>
        <taxon>Bacteroidota</taxon>
        <taxon>Flavobacteriia</taxon>
        <taxon>Flavobacteriales</taxon>
        <taxon>Candidatus Karelsulcia</taxon>
    </lineage>
</organism>
<proteinExistence type="inferred from homology"/>
<reference key="1">
    <citation type="journal article" date="2007" name="Proc. Natl. Acad. Sci. U.S.A.">
        <title>Parallel genomic evolution and metabolic interdependence in an ancient symbiosis.</title>
        <authorList>
            <person name="McCutcheon J.P."/>
            <person name="Moran N.A."/>
        </authorList>
    </citation>
    <scope>NUCLEOTIDE SEQUENCE [LARGE SCALE GENOMIC DNA]</scope>
    <source>
        <strain>GWSS</strain>
    </source>
</reference>
<dbReference type="EMBL" id="CP000770">
    <property type="protein sequence ID" value="ABS30616.1"/>
    <property type="molecule type" value="Genomic_DNA"/>
</dbReference>
<dbReference type="SMR" id="A8Z665"/>
<dbReference type="STRING" id="444179.SMGWSS_219"/>
<dbReference type="KEGG" id="smg:SMGWSS_219"/>
<dbReference type="HOGENOM" id="CLU_072226_1_1_10"/>
<dbReference type="Proteomes" id="UP000000781">
    <property type="component" value="Chromosome"/>
</dbReference>
<dbReference type="GO" id="GO:0015935">
    <property type="term" value="C:small ribosomal subunit"/>
    <property type="evidence" value="ECO:0007669"/>
    <property type="project" value="InterPro"/>
</dbReference>
<dbReference type="GO" id="GO:0019843">
    <property type="term" value="F:rRNA binding"/>
    <property type="evidence" value="ECO:0007669"/>
    <property type="project" value="UniProtKB-UniRule"/>
</dbReference>
<dbReference type="GO" id="GO:0003735">
    <property type="term" value="F:structural constituent of ribosome"/>
    <property type="evidence" value="ECO:0007669"/>
    <property type="project" value="InterPro"/>
</dbReference>
<dbReference type="GO" id="GO:0000049">
    <property type="term" value="F:tRNA binding"/>
    <property type="evidence" value="ECO:0007669"/>
    <property type="project" value="UniProtKB-UniRule"/>
</dbReference>
<dbReference type="GO" id="GO:0006412">
    <property type="term" value="P:translation"/>
    <property type="evidence" value="ECO:0007669"/>
    <property type="project" value="UniProtKB-UniRule"/>
</dbReference>
<dbReference type="CDD" id="cd14869">
    <property type="entry name" value="uS7_Bacteria"/>
    <property type="match status" value="1"/>
</dbReference>
<dbReference type="Gene3D" id="1.10.455.10">
    <property type="entry name" value="Ribosomal protein S7 domain"/>
    <property type="match status" value="1"/>
</dbReference>
<dbReference type="HAMAP" id="MF_00480_B">
    <property type="entry name" value="Ribosomal_uS7_B"/>
    <property type="match status" value="1"/>
</dbReference>
<dbReference type="InterPro" id="IPR000235">
    <property type="entry name" value="Ribosomal_uS7"/>
</dbReference>
<dbReference type="InterPro" id="IPR005717">
    <property type="entry name" value="Ribosomal_uS7_bac/org-type"/>
</dbReference>
<dbReference type="InterPro" id="IPR020606">
    <property type="entry name" value="Ribosomal_uS7_CS"/>
</dbReference>
<dbReference type="InterPro" id="IPR023798">
    <property type="entry name" value="Ribosomal_uS7_dom"/>
</dbReference>
<dbReference type="InterPro" id="IPR036823">
    <property type="entry name" value="Ribosomal_uS7_dom_sf"/>
</dbReference>
<dbReference type="NCBIfam" id="TIGR01029">
    <property type="entry name" value="rpsG_bact"/>
    <property type="match status" value="1"/>
</dbReference>
<dbReference type="PANTHER" id="PTHR11205">
    <property type="entry name" value="RIBOSOMAL PROTEIN S7"/>
    <property type="match status" value="1"/>
</dbReference>
<dbReference type="Pfam" id="PF00177">
    <property type="entry name" value="Ribosomal_S7"/>
    <property type="match status" value="1"/>
</dbReference>
<dbReference type="PIRSF" id="PIRSF002122">
    <property type="entry name" value="RPS7p_RPS7a_RPS5e_RPS7o"/>
    <property type="match status" value="1"/>
</dbReference>
<dbReference type="SUPFAM" id="SSF47973">
    <property type="entry name" value="Ribosomal protein S7"/>
    <property type="match status" value="1"/>
</dbReference>
<dbReference type="PROSITE" id="PS00052">
    <property type="entry name" value="RIBOSOMAL_S7"/>
    <property type="match status" value="1"/>
</dbReference>
<comment type="function">
    <text evidence="1">One of the primary rRNA binding proteins, it binds directly to 16S rRNA where it nucleates assembly of the head domain of the 30S subunit. Is located at the subunit interface close to the decoding center, probably blocks exit of the E-site tRNA.</text>
</comment>
<comment type="subunit">
    <text evidence="1">Part of the 30S ribosomal subunit. Contacts proteins S9 and S11.</text>
</comment>
<comment type="similarity">
    <text evidence="1">Belongs to the universal ribosomal protein uS7 family.</text>
</comment>
<sequence>MRKLKSKRKNYQPDPIYQDTLVTRFVNHLMKDGKKTIAYRIFYNCISEIEKTKKNGLKIWKEALDNVMPHVEVRSRRIGGSNIQVPTQIPPYVKVTKAMKLLISCARERNEKKMYKKLAEEILSAYKKEGAAFKIRENIHKMAEANKAFSHLKF</sequence>
<evidence type="ECO:0000255" key="1">
    <source>
        <dbReference type="HAMAP-Rule" id="MF_00480"/>
    </source>
</evidence>
<evidence type="ECO:0000305" key="2"/>
<gene>
    <name evidence="1" type="primary">rpsG</name>
    <name type="ordered locus">SMGWSS_219</name>
</gene>
<name>RS7_KARMG</name>